<reference key="1">
    <citation type="submission" date="2008-02" db="EMBL/GenBank/DDBJ databases">
        <title>Complete sequence of Yersinia pseudotuberculosis YPIII.</title>
        <authorList>
            <consortium name="US DOE Joint Genome Institute"/>
            <person name="Copeland A."/>
            <person name="Lucas S."/>
            <person name="Lapidus A."/>
            <person name="Glavina del Rio T."/>
            <person name="Dalin E."/>
            <person name="Tice H."/>
            <person name="Bruce D."/>
            <person name="Goodwin L."/>
            <person name="Pitluck S."/>
            <person name="Munk A.C."/>
            <person name="Brettin T."/>
            <person name="Detter J.C."/>
            <person name="Han C."/>
            <person name="Tapia R."/>
            <person name="Schmutz J."/>
            <person name="Larimer F."/>
            <person name="Land M."/>
            <person name="Hauser L."/>
            <person name="Challacombe J.F."/>
            <person name="Green L."/>
            <person name="Lindler L.E."/>
            <person name="Nikolich M.P."/>
            <person name="Richardson P."/>
        </authorList>
    </citation>
    <scope>NUCLEOTIDE SEQUENCE [LARGE SCALE GENOMIC DNA]</scope>
    <source>
        <strain>YPIII</strain>
    </source>
</reference>
<gene>
    <name evidence="1" type="primary">rpsP</name>
    <name type="ordered locus">YPK_3364</name>
</gene>
<keyword id="KW-0687">Ribonucleoprotein</keyword>
<keyword id="KW-0689">Ribosomal protein</keyword>
<organism>
    <name type="scientific">Yersinia pseudotuberculosis serotype O:3 (strain YPIII)</name>
    <dbReference type="NCBI Taxonomy" id="502800"/>
    <lineage>
        <taxon>Bacteria</taxon>
        <taxon>Pseudomonadati</taxon>
        <taxon>Pseudomonadota</taxon>
        <taxon>Gammaproteobacteria</taxon>
        <taxon>Enterobacterales</taxon>
        <taxon>Yersiniaceae</taxon>
        <taxon>Yersinia</taxon>
    </lineage>
</organism>
<dbReference type="EMBL" id="CP000950">
    <property type="protein sequence ID" value="ACA69631.1"/>
    <property type="molecule type" value="Genomic_DNA"/>
</dbReference>
<dbReference type="RefSeq" id="WP_002209458.1">
    <property type="nucleotide sequence ID" value="NZ_CP009792.1"/>
</dbReference>
<dbReference type="SMR" id="B1JJ91"/>
<dbReference type="GeneID" id="96664341"/>
<dbReference type="KEGG" id="ypy:YPK_3364"/>
<dbReference type="PATRIC" id="fig|502800.11.peg.4099"/>
<dbReference type="GO" id="GO:0005737">
    <property type="term" value="C:cytoplasm"/>
    <property type="evidence" value="ECO:0007669"/>
    <property type="project" value="UniProtKB-ARBA"/>
</dbReference>
<dbReference type="GO" id="GO:0015935">
    <property type="term" value="C:small ribosomal subunit"/>
    <property type="evidence" value="ECO:0007669"/>
    <property type="project" value="TreeGrafter"/>
</dbReference>
<dbReference type="GO" id="GO:0003735">
    <property type="term" value="F:structural constituent of ribosome"/>
    <property type="evidence" value="ECO:0007669"/>
    <property type="project" value="InterPro"/>
</dbReference>
<dbReference type="GO" id="GO:0006412">
    <property type="term" value="P:translation"/>
    <property type="evidence" value="ECO:0007669"/>
    <property type="project" value="UniProtKB-UniRule"/>
</dbReference>
<dbReference type="FunFam" id="3.30.1320.10:FF:000001">
    <property type="entry name" value="30S ribosomal protein S16"/>
    <property type="match status" value="1"/>
</dbReference>
<dbReference type="Gene3D" id="3.30.1320.10">
    <property type="match status" value="1"/>
</dbReference>
<dbReference type="HAMAP" id="MF_00385">
    <property type="entry name" value="Ribosomal_bS16"/>
    <property type="match status" value="1"/>
</dbReference>
<dbReference type="InterPro" id="IPR000307">
    <property type="entry name" value="Ribosomal_bS16"/>
</dbReference>
<dbReference type="InterPro" id="IPR020592">
    <property type="entry name" value="Ribosomal_bS16_CS"/>
</dbReference>
<dbReference type="InterPro" id="IPR023803">
    <property type="entry name" value="Ribosomal_bS16_dom_sf"/>
</dbReference>
<dbReference type="NCBIfam" id="TIGR00002">
    <property type="entry name" value="S16"/>
    <property type="match status" value="1"/>
</dbReference>
<dbReference type="PANTHER" id="PTHR12919">
    <property type="entry name" value="30S RIBOSOMAL PROTEIN S16"/>
    <property type="match status" value="1"/>
</dbReference>
<dbReference type="PANTHER" id="PTHR12919:SF20">
    <property type="entry name" value="SMALL RIBOSOMAL SUBUNIT PROTEIN BS16M"/>
    <property type="match status" value="1"/>
</dbReference>
<dbReference type="Pfam" id="PF00886">
    <property type="entry name" value="Ribosomal_S16"/>
    <property type="match status" value="1"/>
</dbReference>
<dbReference type="SUPFAM" id="SSF54565">
    <property type="entry name" value="Ribosomal protein S16"/>
    <property type="match status" value="1"/>
</dbReference>
<dbReference type="PROSITE" id="PS00732">
    <property type="entry name" value="RIBOSOMAL_S16"/>
    <property type="match status" value="1"/>
</dbReference>
<name>RS16_YERPY</name>
<evidence type="ECO:0000255" key="1">
    <source>
        <dbReference type="HAMAP-Rule" id="MF_00385"/>
    </source>
</evidence>
<evidence type="ECO:0000305" key="2"/>
<sequence>MVTIRLARGGAKKRPFYQVVVTDSRNARDGRFIERVGFFNPIASGQAEALRLDLDRIEHWIGLGATVSDRVSVLIKDAKKAA</sequence>
<proteinExistence type="inferred from homology"/>
<protein>
    <recommendedName>
        <fullName evidence="1">Small ribosomal subunit protein bS16</fullName>
    </recommendedName>
    <alternativeName>
        <fullName evidence="2">30S ribosomal protein S16</fullName>
    </alternativeName>
</protein>
<feature type="chain" id="PRO_1000122605" description="Small ribosomal subunit protein bS16">
    <location>
        <begin position="1"/>
        <end position="82"/>
    </location>
</feature>
<comment type="similarity">
    <text evidence="1">Belongs to the bacterial ribosomal protein bS16 family.</text>
</comment>
<accession>B1JJ91</accession>